<evidence type="ECO:0000255" key="1"/>
<evidence type="ECO:0000255" key="2">
    <source>
        <dbReference type="PROSITE-ProRule" id="PRU01266"/>
    </source>
</evidence>
<evidence type="ECO:0000305" key="3"/>
<organism>
    <name type="scientific">Methanocaldococcus jannaschii (strain ATCC 43067 / DSM 2661 / JAL-1 / JCM 10045 / NBRC 100440)</name>
    <name type="common">Methanococcus jannaschii</name>
    <dbReference type="NCBI Taxonomy" id="243232"/>
    <lineage>
        <taxon>Archaea</taxon>
        <taxon>Methanobacteriati</taxon>
        <taxon>Methanobacteriota</taxon>
        <taxon>Methanomada group</taxon>
        <taxon>Methanococci</taxon>
        <taxon>Methanococcales</taxon>
        <taxon>Methanocaldococcaceae</taxon>
        <taxon>Methanocaldococcus</taxon>
    </lineage>
</organism>
<keyword id="KW-0004">4Fe-4S</keyword>
<keyword id="KW-0408">Iron</keyword>
<keyword id="KW-0411">Iron-sulfur</keyword>
<keyword id="KW-0479">Metal-binding</keyword>
<keyword id="KW-1185">Reference proteome</keyword>
<keyword id="KW-0949">S-adenosyl-L-methionine</keyword>
<name>Y804_METJA</name>
<feature type="chain" id="PRO_0000107054" description="Uncharacterized protein MJ0804">
    <location>
        <begin position="1"/>
        <end position="286"/>
    </location>
</feature>
<feature type="domain" description="Radical SAM core" evidence="2">
    <location>
        <begin position="36"/>
        <end position="256"/>
    </location>
</feature>
<feature type="binding site" evidence="1">
    <location>
        <position position="50"/>
    </location>
    <ligand>
        <name>[4Fe-4S] cluster</name>
        <dbReference type="ChEBI" id="CHEBI:49883"/>
        <note>4Fe-4S-S-AdoMet</note>
    </ligand>
</feature>
<feature type="binding site" evidence="1">
    <location>
        <position position="54"/>
    </location>
    <ligand>
        <name>[4Fe-4S] cluster</name>
        <dbReference type="ChEBI" id="CHEBI:49883"/>
        <note>4Fe-4S-S-AdoMet</note>
    </ligand>
</feature>
<feature type="binding site" evidence="1">
    <location>
        <position position="57"/>
    </location>
    <ligand>
        <name>[4Fe-4S] cluster</name>
        <dbReference type="ChEBI" id="CHEBI:49883"/>
        <note>4Fe-4S-S-AdoMet</note>
    </ligand>
</feature>
<comment type="cofactor">
    <cofactor evidence="3">
        <name>[4Fe-4S] cluster</name>
        <dbReference type="ChEBI" id="CHEBI:49883"/>
    </cofactor>
    <text evidence="3">Binds 1 [4Fe-4S] cluster. The cluster is coordinated with 3 cysteines and an exchangeable S-adenosyl-L-methionine.</text>
</comment>
<accession>Q58214</accession>
<reference key="1">
    <citation type="journal article" date="1996" name="Science">
        <title>Complete genome sequence of the methanogenic archaeon, Methanococcus jannaschii.</title>
        <authorList>
            <person name="Bult C.J."/>
            <person name="White O."/>
            <person name="Olsen G.J."/>
            <person name="Zhou L."/>
            <person name="Fleischmann R.D."/>
            <person name="Sutton G.G."/>
            <person name="Blake J.A."/>
            <person name="FitzGerald L.M."/>
            <person name="Clayton R.A."/>
            <person name="Gocayne J.D."/>
            <person name="Kerlavage A.R."/>
            <person name="Dougherty B.A."/>
            <person name="Tomb J.-F."/>
            <person name="Adams M.D."/>
            <person name="Reich C.I."/>
            <person name="Overbeek R."/>
            <person name="Kirkness E.F."/>
            <person name="Weinstock K.G."/>
            <person name="Merrick J.M."/>
            <person name="Glodek A."/>
            <person name="Scott J.L."/>
            <person name="Geoghagen N.S.M."/>
            <person name="Weidman J.F."/>
            <person name="Fuhrmann J.L."/>
            <person name="Nguyen D."/>
            <person name="Utterback T.R."/>
            <person name="Kelley J.M."/>
            <person name="Peterson J.D."/>
            <person name="Sadow P.W."/>
            <person name="Hanna M.C."/>
            <person name="Cotton M.D."/>
            <person name="Roberts K.M."/>
            <person name="Hurst M.A."/>
            <person name="Kaine B.P."/>
            <person name="Borodovsky M."/>
            <person name="Klenk H.-P."/>
            <person name="Fraser C.M."/>
            <person name="Smith H.O."/>
            <person name="Woese C.R."/>
            <person name="Venter J.C."/>
        </authorList>
    </citation>
    <scope>NUCLEOTIDE SEQUENCE [LARGE SCALE GENOMIC DNA]</scope>
    <source>
        <strain>ATCC 43067 / DSM 2661 / JAL-1 / JCM 10045 / NBRC 100440</strain>
    </source>
</reference>
<proteinExistence type="predicted"/>
<dbReference type="EMBL" id="L77117">
    <property type="protein sequence ID" value="AAB98804.1"/>
    <property type="molecule type" value="Genomic_DNA"/>
</dbReference>
<dbReference type="PIR" id="D64400">
    <property type="entry name" value="D64400"/>
</dbReference>
<dbReference type="RefSeq" id="WP_010870314.1">
    <property type="nucleotide sequence ID" value="NC_000909.1"/>
</dbReference>
<dbReference type="SMR" id="Q58214"/>
<dbReference type="STRING" id="243232.MJ_0804"/>
<dbReference type="PaxDb" id="243232-MJ_0804"/>
<dbReference type="EnsemblBacteria" id="AAB98804">
    <property type="protein sequence ID" value="AAB98804"/>
    <property type="gene ID" value="MJ_0804"/>
</dbReference>
<dbReference type="GeneID" id="1451686"/>
<dbReference type="KEGG" id="mja:MJ_0804"/>
<dbReference type="eggNOG" id="arCOG00955">
    <property type="taxonomic scope" value="Archaea"/>
</dbReference>
<dbReference type="HOGENOM" id="CLU_061501_0_0_2"/>
<dbReference type="InParanoid" id="Q58214"/>
<dbReference type="OrthoDB" id="53113at2157"/>
<dbReference type="PhylomeDB" id="Q58214"/>
<dbReference type="Proteomes" id="UP000000805">
    <property type="component" value="Chromosome"/>
</dbReference>
<dbReference type="GO" id="GO:0051539">
    <property type="term" value="F:4 iron, 4 sulfur cluster binding"/>
    <property type="evidence" value="ECO:0007669"/>
    <property type="project" value="UniProtKB-KW"/>
</dbReference>
<dbReference type="GO" id="GO:0003824">
    <property type="term" value="F:catalytic activity"/>
    <property type="evidence" value="ECO:0007669"/>
    <property type="project" value="InterPro"/>
</dbReference>
<dbReference type="GO" id="GO:0046872">
    <property type="term" value="F:metal ion binding"/>
    <property type="evidence" value="ECO:0007669"/>
    <property type="project" value="UniProtKB-KW"/>
</dbReference>
<dbReference type="CDD" id="cd01335">
    <property type="entry name" value="Radical_SAM"/>
    <property type="match status" value="1"/>
</dbReference>
<dbReference type="Gene3D" id="3.20.20.70">
    <property type="entry name" value="Aldolase class I"/>
    <property type="match status" value="1"/>
</dbReference>
<dbReference type="InterPro" id="IPR013785">
    <property type="entry name" value="Aldolase_TIM"/>
</dbReference>
<dbReference type="InterPro" id="IPR006638">
    <property type="entry name" value="Elp3/MiaA/NifB-like_rSAM"/>
</dbReference>
<dbReference type="InterPro" id="IPR000385">
    <property type="entry name" value="MoaA_NifB_PqqE_Fe-S-bd_CS"/>
</dbReference>
<dbReference type="InterPro" id="IPR007197">
    <property type="entry name" value="rSAM"/>
</dbReference>
<dbReference type="PANTHER" id="PTHR43787:SF3">
    <property type="entry name" value="ARYLSULFATASE REGULATORY PROTEIN"/>
    <property type="match status" value="1"/>
</dbReference>
<dbReference type="PANTHER" id="PTHR43787">
    <property type="entry name" value="FEMO COFACTOR BIOSYNTHESIS PROTEIN NIFB-RELATED"/>
    <property type="match status" value="1"/>
</dbReference>
<dbReference type="Pfam" id="PF04055">
    <property type="entry name" value="Radical_SAM"/>
    <property type="match status" value="1"/>
</dbReference>
<dbReference type="SFLD" id="SFLDS00029">
    <property type="entry name" value="Radical_SAM"/>
    <property type="match status" value="1"/>
</dbReference>
<dbReference type="SFLD" id="SFLDG01067">
    <property type="entry name" value="SPASM/twitch_domain_containing"/>
    <property type="match status" value="1"/>
</dbReference>
<dbReference type="SMART" id="SM00729">
    <property type="entry name" value="Elp3"/>
    <property type="match status" value="1"/>
</dbReference>
<dbReference type="SUPFAM" id="SSF52954">
    <property type="entry name" value="Class II aaRS ABD-related"/>
    <property type="match status" value="1"/>
</dbReference>
<dbReference type="SUPFAM" id="SSF102114">
    <property type="entry name" value="Radical SAM enzymes"/>
    <property type="match status" value="1"/>
</dbReference>
<dbReference type="PROSITE" id="PS51918">
    <property type="entry name" value="RADICAL_SAM"/>
    <property type="match status" value="1"/>
</dbReference>
<sequence length="286" mass="32920">MIVLRNEICDKLENIAKILKFVRHCIGCEGINLEIENPQHHPSIELTQKCNLNCIYCYSRLKTVKRGIYGNLEEAETVTISQYGEPLLDLEGVKKAIEFCKDLGLRVDLQTNGTLLNEEIIKELKDLGLDLIMISLSSFSREKYKLLTGKDYFNRVLNNIKIASKYLHTIVRSIYIPGFNDNELLNLAKELNNYADEIMVHQLISYKENENLLKNAGIDLNNLGRIRDLLLIVDEMQKNAPKINVTIKGCLLVQLKEMDGFILNNITYDVFSEVPDIKREHRPLPW</sequence>
<protein>
    <recommendedName>
        <fullName>Uncharacterized protein MJ0804</fullName>
    </recommendedName>
</protein>
<gene>
    <name type="ordered locus">MJ0804</name>
</gene>